<sequence length="89" mass="8382">MTLLASISTIGNVKSISKSNNFSSLSNSSLQSSNSIQCGGCGGGNSLIGTVGGLVGGVLVGTGIIVGTVIGTVNGVVGGLLSGPSCGCH</sequence>
<accession>Q55AL7</accession>
<accession>Q75JC3</accession>
<name>HSL14_DICDI</name>
<comment type="similarity">
    <text evidence="1">Belongs to the hssA/B family.</text>
</comment>
<organism>
    <name type="scientific">Dictyostelium discoideum</name>
    <name type="common">Social amoeba</name>
    <dbReference type="NCBI Taxonomy" id="44689"/>
    <lineage>
        <taxon>Eukaryota</taxon>
        <taxon>Amoebozoa</taxon>
        <taxon>Evosea</taxon>
        <taxon>Eumycetozoa</taxon>
        <taxon>Dictyostelia</taxon>
        <taxon>Dictyosteliales</taxon>
        <taxon>Dictyosteliaceae</taxon>
        <taxon>Dictyostelium</taxon>
    </lineage>
</organism>
<feature type="chain" id="PRO_0000330384" description="HssA/B-like protein 14">
    <location>
        <begin position="1"/>
        <end position="89"/>
    </location>
</feature>
<keyword id="KW-1185">Reference proteome</keyword>
<dbReference type="EMBL" id="AAFI02000006">
    <property type="protein sequence ID" value="EAL71602.1"/>
    <property type="molecule type" value="Genomic_DNA"/>
</dbReference>
<dbReference type="RefSeq" id="XP_645505.1">
    <property type="nucleotide sequence ID" value="XM_640413.1"/>
</dbReference>
<dbReference type="FunCoup" id="Q55AL7">
    <property type="interactions" value="243"/>
</dbReference>
<dbReference type="PaxDb" id="44689-DDB0238812"/>
<dbReference type="EnsemblProtists" id="EAL71602">
    <property type="protein sequence ID" value="EAL71602"/>
    <property type="gene ID" value="DDB_G0271824"/>
</dbReference>
<dbReference type="GeneID" id="8618134"/>
<dbReference type="KEGG" id="ddi:DDB_G0271824"/>
<dbReference type="dictyBase" id="DDB_G0271824">
    <property type="gene designation" value="sigN8"/>
</dbReference>
<dbReference type="HOGENOM" id="CLU_190274_0_0_1"/>
<dbReference type="InParanoid" id="Q55AL7"/>
<dbReference type="OMA" id="GPSCGCH"/>
<dbReference type="PRO" id="PR:Q55AL7"/>
<dbReference type="Proteomes" id="UP000002195">
    <property type="component" value="Chromosome 2"/>
</dbReference>
<dbReference type="GO" id="GO:0030587">
    <property type="term" value="P:sorocarp development"/>
    <property type="evidence" value="ECO:0000318"/>
    <property type="project" value="GO_Central"/>
</dbReference>
<dbReference type="InterPro" id="IPR008455">
    <property type="entry name" value="HssA/B-related"/>
</dbReference>
<dbReference type="PANTHER" id="PTHR31857">
    <property type="entry name" value="HSSA/B-LIKE PROTEIN 17-RELATED"/>
    <property type="match status" value="1"/>
</dbReference>
<dbReference type="PANTHER" id="PTHR31857:SF2">
    <property type="entry name" value="HSSA_B-LIKE PROTEIN 17-RELATED"/>
    <property type="match status" value="1"/>
</dbReference>
<dbReference type="Pfam" id="PF05710">
    <property type="entry name" value="Coiled"/>
    <property type="match status" value="1"/>
</dbReference>
<evidence type="ECO:0000305" key="1"/>
<gene>
    <name type="primary">hssl14</name>
    <name type="ORF">DDB_G0271824</name>
</gene>
<protein>
    <recommendedName>
        <fullName>HssA/B-like protein 14</fullName>
    </recommendedName>
</protein>
<reference key="1">
    <citation type="journal article" date="2002" name="Nature">
        <title>Sequence and analysis of chromosome 2 of Dictyostelium discoideum.</title>
        <authorList>
            <person name="Gloeckner G."/>
            <person name="Eichinger L."/>
            <person name="Szafranski K."/>
            <person name="Pachebat J.A."/>
            <person name="Bankier A.T."/>
            <person name="Dear P.H."/>
            <person name="Lehmann R."/>
            <person name="Baumgart C."/>
            <person name="Parra G."/>
            <person name="Abril J.F."/>
            <person name="Guigo R."/>
            <person name="Kumpf K."/>
            <person name="Tunggal B."/>
            <person name="Cox E.C."/>
            <person name="Quail M.A."/>
            <person name="Platzer M."/>
            <person name="Rosenthal A."/>
            <person name="Noegel A.A."/>
        </authorList>
    </citation>
    <scope>NUCLEOTIDE SEQUENCE [LARGE SCALE GENOMIC DNA]</scope>
    <source>
        <strain>AX4</strain>
    </source>
</reference>
<reference key="2">
    <citation type="journal article" date="2005" name="Nature">
        <title>The genome of the social amoeba Dictyostelium discoideum.</title>
        <authorList>
            <person name="Eichinger L."/>
            <person name="Pachebat J.A."/>
            <person name="Gloeckner G."/>
            <person name="Rajandream M.A."/>
            <person name="Sucgang R."/>
            <person name="Berriman M."/>
            <person name="Song J."/>
            <person name="Olsen R."/>
            <person name="Szafranski K."/>
            <person name="Xu Q."/>
            <person name="Tunggal B."/>
            <person name="Kummerfeld S."/>
            <person name="Madera M."/>
            <person name="Konfortov B.A."/>
            <person name="Rivero F."/>
            <person name="Bankier A.T."/>
            <person name="Lehmann R."/>
            <person name="Hamlin N."/>
            <person name="Davies R."/>
            <person name="Gaudet P."/>
            <person name="Fey P."/>
            <person name="Pilcher K."/>
            <person name="Chen G."/>
            <person name="Saunders D."/>
            <person name="Sodergren E.J."/>
            <person name="Davis P."/>
            <person name="Kerhornou A."/>
            <person name="Nie X."/>
            <person name="Hall N."/>
            <person name="Anjard C."/>
            <person name="Hemphill L."/>
            <person name="Bason N."/>
            <person name="Farbrother P."/>
            <person name="Desany B."/>
            <person name="Just E."/>
            <person name="Morio T."/>
            <person name="Rost R."/>
            <person name="Churcher C.M."/>
            <person name="Cooper J."/>
            <person name="Haydock S."/>
            <person name="van Driessche N."/>
            <person name="Cronin A."/>
            <person name="Goodhead I."/>
            <person name="Muzny D.M."/>
            <person name="Mourier T."/>
            <person name="Pain A."/>
            <person name="Lu M."/>
            <person name="Harper D."/>
            <person name="Lindsay R."/>
            <person name="Hauser H."/>
            <person name="James K.D."/>
            <person name="Quiles M."/>
            <person name="Madan Babu M."/>
            <person name="Saito T."/>
            <person name="Buchrieser C."/>
            <person name="Wardroper A."/>
            <person name="Felder M."/>
            <person name="Thangavelu M."/>
            <person name="Johnson D."/>
            <person name="Knights A."/>
            <person name="Loulseged H."/>
            <person name="Mungall K.L."/>
            <person name="Oliver K."/>
            <person name="Price C."/>
            <person name="Quail M.A."/>
            <person name="Urushihara H."/>
            <person name="Hernandez J."/>
            <person name="Rabbinowitsch E."/>
            <person name="Steffen D."/>
            <person name="Sanders M."/>
            <person name="Ma J."/>
            <person name="Kohara Y."/>
            <person name="Sharp S."/>
            <person name="Simmonds M.N."/>
            <person name="Spiegler S."/>
            <person name="Tivey A."/>
            <person name="Sugano S."/>
            <person name="White B."/>
            <person name="Walker D."/>
            <person name="Woodward J.R."/>
            <person name="Winckler T."/>
            <person name="Tanaka Y."/>
            <person name="Shaulsky G."/>
            <person name="Schleicher M."/>
            <person name="Weinstock G.M."/>
            <person name="Rosenthal A."/>
            <person name="Cox E.C."/>
            <person name="Chisholm R.L."/>
            <person name="Gibbs R.A."/>
            <person name="Loomis W.F."/>
            <person name="Platzer M."/>
            <person name="Kay R.R."/>
            <person name="Williams J.G."/>
            <person name="Dear P.H."/>
            <person name="Noegel A.A."/>
            <person name="Barrell B.G."/>
            <person name="Kuspa A."/>
        </authorList>
    </citation>
    <scope>NUCLEOTIDE SEQUENCE [LARGE SCALE GENOMIC DNA]</scope>
    <source>
        <strain>AX4</strain>
    </source>
</reference>
<proteinExistence type="inferred from homology"/>